<evidence type="ECO:0000255" key="1">
    <source>
        <dbReference type="HAMAP-Rule" id="MF_00181"/>
    </source>
</evidence>
<proteinExistence type="inferred from homology"/>
<organism>
    <name type="scientific">Bacillus cereus (strain AH820)</name>
    <dbReference type="NCBI Taxonomy" id="405535"/>
    <lineage>
        <taxon>Bacteria</taxon>
        <taxon>Bacillati</taxon>
        <taxon>Bacillota</taxon>
        <taxon>Bacilli</taxon>
        <taxon>Bacillales</taxon>
        <taxon>Bacillaceae</taxon>
        <taxon>Bacillus</taxon>
        <taxon>Bacillus cereus group</taxon>
    </lineage>
</organism>
<sequence>MFQVQKELASHEAVVVALFEEEKTSSFVQELDKAFEGQLQVLLEEKELSTKKKAISKVHSLGKTDVKRYYFVGLGKKESYTTETLRSALGKTFKTLQAAKVQDAAILLDSFVTEKLDAIDVAHIAAEVQGLGTYELQTYKSDKKDRVELEKFTAITAEDAQEIEAALTVGYVHGRATNSARTLVNMPPNVLTATKLAEYAVELAEKYDMDYKVLEKEEMEELGMGALLAVNQGSVEPPKMIALIYKGKEEWTDVIGFVGKGITYDTGGYSLKPREGMVGMKGDMGGAAAVLGAMEIIGELRPEQNVIAVIPSTDNVVSGTAFKPDDVITSMSGKTIEVLNTDAEGRLALADGITYAKKLGANYLIDVATLTGGVIVALGNHTTGAMTNNEELFEQVLEASMETDESIWQLPIFDRDKERVRNSKFADLNNSPGREGHAVMAGTFIGEFAEDTPWVHLDIAGTSESSGAHDLGPAGATGAMVRTLATLVERFGEE</sequence>
<keyword id="KW-0031">Aminopeptidase</keyword>
<keyword id="KW-0963">Cytoplasm</keyword>
<keyword id="KW-0378">Hydrolase</keyword>
<keyword id="KW-0464">Manganese</keyword>
<keyword id="KW-0479">Metal-binding</keyword>
<keyword id="KW-0645">Protease</keyword>
<feature type="chain" id="PRO_1000118446" description="Probable cytosol aminopeptidase">
    <location>
        <begin position="1"/>
        <end position="494"/>
    </location>
</feature>
<feature type="active site" evidence="1">
    <location>
        <position position="272"/>
    </location>
</feature>
<feature type="active site" evidence="1">
    <location>
        <position position="346"/>
    </location>
</feature>
<feature type="binding site" evidence="1">
    <location>
        <position position="260"/>
    </location>
    <ligand>
        <name>Mn(2+)</name>
        <dbReference type="ChEBI" id="CHEBI:29035"/>
        <label>2</label>
    </ligand>
</feature>
<feature type="binding site" evidence="1">
    <location>
        <position position="265"/>
    </location>
    <ligand>
        <name>Mn(2+)</name>
        <dbReference type="ChEBI" id="CHEBI:29035"/>
        <label>1</label>
    </ligand>
</feature>
<feature type="binding site" evidence="1">
    <location>
        <position position="265"/>
    </location>
    <ligand>
        <name>Mn(2+)</name>
        <dbReference type="ChEBI" id="CHEBI:29035"/>
        <label>2</label>
    </ligand>
</feature>
<feature type="binding site" evidence="1">
    <location>
        <position position="283"/>
    </location>
    <ligand>
        <name>Mn(2+)</name>
        <dbReference type="ChEBI" id="CHEBI:29035"/>
        <label>2</label>
    </ligand>
</feature>
<feature type="binding site" evidence="1">
    <location>
        <position position="342"/>
    </location>
    <ligand>
        <name>Mn(2+)</name>
        <dbReference type="ChEBI" id="CHEBI:29035"/>
        <label>1</label>
    </ligand>
</feature>
<feature type="binding site" evidence="1">
    <location>
        <position position="344"/>
    </location>
    <ligand>
        <name>Mn(2+)</name>
        <dbReference type="ChEBI" id="CHEBI:29035"/>
        <label>1</label>
    </ligand>
</feature>
<feature type="binding site" evidence="1">
    <location>
        <position position="344"/>
    </location>
    <ligand>
        <name>Mn(2+)</name>
        <dbReference type="ChEBI" id="CHEBI:29035"/>
        <label>2</label>
    </ligand>
</feature>
<name>AMPA_BACC0</name>
<dbReference type="EC" id="3.4.11.1" evidence="1"/>
<dbReference type="EC" id="3.4.11.10" evidence="1"/>
<dbReference type="EMBL" id="CP001283">
    <property type="protein sequence ID" value="ACK91856.1"/>
    <property type="molecule type" value="Genomic_DNA"/>
</dbReference>
<dbReference type="RefSeq" id="WP_000487985.1">
    <property type="nucleotide sequence ID" value="NC_011773.1"/>
</dbReference>
<dbReference type="SMR" id="B7JDH9"/>
<dbReference type="MEROPS" id="M17.010"/>
<dbReference type="GeneID" id="45024781"/>
<dbReference type="KEGG" id="bcu:BCAH820_5032"/>
<dbReference type="HOGENOM" id="CLU_013734_6_0_9"/>
<dbReference type="Proteomes" id="UP000001363">
    <property type="component" value="Chromosome"/>
</dbReference>
<dbReference type="GO" id="GO:0005737">
    <property type="term" value="C:cytoplasm"/>
    <property type="evidence" value="ECO:0007669"/>
    <property type="project" value="UniProtKB-SubCell"/>
</dbReference>
<dbReference type="GO" id="GO:0030145">
    <property type="term" value="F:manganese ion binding"/>
    <property type="evidence" value="ECO:0007669"/>
    <property type="project" value="UniProtKB-UniRule"/>
</dbReference>
<dbReference type="GO" id="GO:0070006">
    <property type="term" value="F:metalloaminopeptidase activity"/>
    <property type="evidence" value="ECO:0007669"/>
    <property type="project" value="InterPro"/>
</dbReference>
<dbReference type="GO" id="GO:0006508">
    <property type="term" value="P:proteolysis"/>
    <property type="evidence" value="ECO:0007669"/>
    <property type="project" value="UniProtKB-KW"/>
</dbReference>
<dbReference type="CDD" id="cd00433">
    <property type="entry name" value="Peptidase_M17"/>
    <property type="match status" value="1"/>
</dbReference>
<dbReference type="Gene3D" id="3.40.220.10">
    <property type="entry name" value="Leucine Aminopeptidase, subunit E, domain 1"/>
    <property type="match status" value="1"/>
</dbReference>
<dbReference type="Gene3D" id="3.40.630.10">
    <property type="entry name" value="Zn peptidases"/>
    <property type="match status" value="1"/>
</dbReference>
<dbReference type="HAMAP" id="MF_00181">
    <property type="entry name" value="Cytosol_peptidase_M17"/>
    <property type="match status" value="1"/>
</dbReference>
<dbReference type="InterPro" id="IPR011356">
    <property type="entry name" value="Leucine_aapep/pepB"/>
</dbReference>
<dbReference type="InterPro" id="IPR043472">
    <property type="entry name" value="Macro_dom-like"/>
</dbReference>
<dbReference type="InterPro" id="IPR000819">
    <property type="entry name" value="Peptidase_M17_C"/>
</dbReference>
<dbReference type="InterPro" id="IPR023042">
    <property type="entry name" value="Peptidase_M17_leu_NH2_pept"/>
</dbReference>
<dbReference type="InterPro" id="IPR008283">
    <property type="entry name" value="Peptidase_M17_N"/>
</dbReference>
<dbReference type="NCBIfam" id="NF002073">
    <property type="entry name" value="PRK00913.1-2"/>
    <property type="match status" value="1"/>
</dbReference>
<dbReference type="NCBIfam" id="NF002074">
    <property type="entry name" value="PRK00913.1-4"/>
    <property type="match status" value="1"/>
</dbReference>
<dbReference type="NCBIfam" id="NF002083">
    <property type="entry name" value="PRK00913.3-5"/>
    <property type="match status" value="1"/>
</dbReference>
<dbReference type="PANTHER" id="PTHR11963:SF23">
    <property type="entry name" value="CYTOSOL AMINOPEPTIDASE"/>
    <property type="match status" value="1"/>
</dbReference>
<dbReference type="PANTHER" id="PTHR11963">
    <property type="entry name" value="LEUCINE AMINOPEPTIDASE-RELATED"/>
    <property type="match status" value="1"/>
</dbReference>
<dbReference type="Pfam" id="PF00883">
    <property type="entry name" value="Peptidase_M17"/>
    <property type="match status" value="1"/>
</dbReference>
<dbReference type="Pfam" id="PF02789">
    <property type="entry name" value="Peptidase_M17_N"/>
    <property type="match status" value="1"/>
</dbReference>
<dbReference type="PRINTS" id="PR00481">
    <property type="entry name" value="LAMNOPPTDASE"/>
</dbReference>
<dbReference type="SUPFAM" id="SSF52949">
    <property type="entry name" value="Macro domain-like"/>
    <property type="match status" value="1"/>
</dbReference>
<dbReference type="SUPFAM" id="SSF53187">
    <property type="entry name" value="Zn-dependent exopeptidases"/>
    <property type="match status" value="1"/>
</dbReference>
<dbReference type="PROSITE" id="PS00631">
    <property type="entry name" value="CYTOSOL_AP"/>
    <property type="match status" value="1"/>
</dbReference>
<gene>
    <name evidence="1" type="primary">pepA</name>
    <name type="ordered locus">BCAH820_5032</name>
</gene>
<protein>
    <recommendedName>
        <fullName evidence="1">Probable cytosol aminopeptidase</fullName>
        <ecNumber evidence="1">3.4.11.1</ecNumber>
    </recommendedName>
    <alternativeName>
        <fullName evidence="1">Leucine aminopeptidase</fullName>
        <shortName evidence="1">LAP</shortName>
        <ecNumber evidence="1">3.4.11.10</ecNumber>
    </alternativeName>
    <alternativeName>
        <fullName evidence="1">Leucyl aminopeptidase</fullName>
    </alternativeName>
</protein>
<reference key="1">
    <citation type="submission" date="2008-10" db="EMBL/GenBank/DDBJ databases">
        <title>Genome sequence of Bacillus cereus AH820.</title>
        <authorList>
            <person name="Dodson R.J."/>
            <person name="Durkin A.S."/>
            <person name="Rosovitz M.J."/>
            <person name="Rasko D.A."/>
            <person name="Hoffmaster A."/>
            <person name="Ravel J."/>
            <person name="Sutton G."/>
        </authorList>
    </citation>
    <scope>NUCLEOTIDE SEQUENCE [LARGE SCALE GENOMIC DNA]</scope>
    <source>
        <strain>AH820</strain>
    </source>
</reference>
<comment type="function">
    <text evidence="1">Presumably involved in the processing and regular turnover of intracellular proteins. Catalyzes the removal of unsubstituted N-terminal amino acids from various peptides.</text>
</comment>
<comment type="catalytic activity">
    <reaction evidence="1">
        <text>Release of an N-terminal amino acid, Xaa-|-Yaa-, in which Xaa is preferably Leu, but may be other amino acids including Pro although not Arg or Lys, and Yaa may be Pro. Amino acid amides and methyl esters are also readily hydrolyzed, but rates on arylamides are exceedingly low.</text>
        <dbReference type="EC" id="3.4.11.1"/>
    </reaction>
</comment>
<comment type="catalytic activity">
    <reaction evidence="1">
        <text>Release of an N-terminal amino acid, preferentially leucine, but not glutamic or aspartic acids.</text>
        <dbReference type="EC" id="3.4.11.10"/>
    </reaction>
</comment>
<comment type="cofactor">
    <cofactor evidence="1">
        <name>Mn(2+)</name>
        <dbReference type="ChEBI" id="CHEBI:29035"/>
    </cofactor>
    <text evidence="1">Binds 2 manganese ions per subunit.</text>
</comment>
<comment type="subcellular location">
    <subcellularLocation>
        <location evidence="1">Cytoplasm</location>
    </subcellularLocation>
</comment>
<comment type="similarity">
    <text evidence="1">Belongs to the peptidase M17 family.</text>
</comment>
<accession>B7JDH9</accession>